<evidence type="ECO:0000250" key="1"/>
<evidence type="ECO:0000255" key="2"/>
<evidence type="ECO:0000305" key="3"/>
<organism>
    <name type="scientific">Staphylococcus epidermidis (strain ATCC 12228 / FDA PCI 1200)</name>
    <dbReference type="NCBI Taxonomy" id="176280"/>
    <lineage>
        <taxon>Bacteria</taxon>
        <taxon>Bacillati</taxon>
        <taxon>Bacillota</taxon>
        <taxon>Bacilli</taxon>
        <taxon>Bacillales</taxon>
        <taxon>Staphylococcaceae</taxon>
        <taxon>Staphylococcus</taxon>
    </lineage>
</organism>
<accession>Q8CPV2</accession>
<keyword id="KW-0050">Antiport</keyword>
<keyword id="KW-1003">Cell membrane</keyword>
<keyword id="KW-0375">Hydrogen ion transport</keyword>
<keyword id="KW-0406">Ion transport</keyword>
<keyword id="KW-0472">Membrane</keyword>
<keyword id="KW-0915">Sodium</keyword>
<keyword id="KW-0739">Sodium transport</keyword>
<keyword id="KW-0812">Transmembrane</keyword>
<keyword id="KW-1133">Transmembrane helix</keyword>
<keyword id="KW-0813">Transport</keyword>
<sequence>MAIQFVINLLVSVIWLLVTNSYTLNNFVLGFILGLFLVYLLHRVLPGQFYLVRIYRIIMLIITFLTELIKANFGVLKIILKPRIENKPGFFVYETELERDWQLVLLSNLITLTPGTVVLGISDDRKKIYIHSIDFSTKEEEIQNIKSSLEKVVRKVGEK</sequence>
<gene>
    <name type="primary">mnhE1</name>
    <name type="ordered locus">SE_0642</name>
</gene>
<dbReference type="EMBL" id="AE015929">
    <property type="protein sequence ID" value="AAO04239.1"/>
    <property type="molecule type" value="Genomic_DNA"/>
</dbReference>
<dbReference type="RefSeq" id="NP_764197.1">
    <property type="nucleotide sequence ID" value="NC_004461.1"/>
</dbReference>
<dbReference type="RefSeq" id="WP_001831972.1">
    <property type="nucleotide sequence ID" value="NZ_WBME01000044.1"/>
</dbReference>
<dbReference type="SMR" id="Q8CPV2"/>
<dbReference type="KEGG" id="sep:SE_0642"/>
<dbReference type="PATRIC" id="fig|176280.10.peg.615"/>
<dbReference type="eggNOG" id="COG1863">
    <property type="taxonomic scope" value="Bacteria"/>
</dbReference>
<dbReference type="HOGENOM" id="CLU_086615_3_2_9"/>
<dbReference type="OrthoDB" id="9800498at2"/>
<dbReference type="Proteomes" id="UP000001411">
    <property type="component" value="Chromosome"/>
</dbReference>
<dbReference type="GO" id="GO:0005886">
    <property type="term" value="C:plasma membrane"/>
    <property type="evidence" value="ECO:0007669"/>
    <property type="project" value="UniProtKB-SubCell"/>
</dbReference>
<dbReference type="GO" id="GO:0015297">
    <property type="term" value="F:antiporter activity"/>
    <property type="evidence" value="ECO:0007669"/>
    <property type="project" value="UniProtKB-KW"/>
</dbReference>
<dbReference type="GO" id="GO:0008324">
    <property type="term" value="F:monoatomic cation transmembrane transporter activity"/>
    <property type="evidence" value="ECO:0007669"/>
    <property type="project" value="InterPro"/>
</dbReference>
<dbReference type="GO" id="GO:1902600">
    <property type="term" value="P:proton transmembrane transport"/>
    <property type="evidence" value="ECO:0007669"/>
    <property type="project" value="UniProtKB-KW"/>
</dbReference>
<dbReference type="GO" id="GO:0006814">
    <property type="term" value="P:sodium ion transport"/>
    <property type="evidence" value="ECO:0007669"/>
    <property type="project" value="UniProtKB-KW"/>
</dbReference>
<dbReference type="InterPro" id="IPR002758">
    <property type="entry name" value="Cation_antiport_E"/>
</dbReference>
<dbReference type="NCBIfam" id="NF009291">
    <property type="entry name" value="PRK12651.1-1"/>
    <property type="match status" value="1"/>
</dbReference>
<dbReference type="PANTHER" id="PTHR34584">
    <property type="entry name" value="NA(+)/H(+) ANTIPORTER SUBUNIT E1"/>
    <property type="match status" value="1"/>
</dbReference>
<dbReference type="PANTHER" id="PTHR34584:SF1">
    <property type="entry name" value="NA(+)_H(+) ANTIPORTER SUBUNIT E1"/>
    <property type="match status" value="1"/>
</dbReference>
<dbReference type="Pfam" id="PF01899">
    <property type="entry name" value="MNHE"/>
    <property type="match status" value="1"/>
</dbReference>
<dbReference type="PIRSF" id="PIRSF019239">
    <property type="entry name" value="MrpE"/>
    <property type="match status" value="1"/>
</dbReference>
<reference key="1">
    <citation type="journal article" date="2003" name="Mol. Microbiol.">
        <title>Genome-based analysis of virulence genes in a non-biofilm-forming Staphylococcus epidermidis strain (ATCC 12228).</title>
        <authorList>
            <person name="Zhang Y.-Q."/>
            <person name="Ren S.-X."/>
            <person name="Li H.-L."/>
            <person name="Wang Y.-X."/>
            <person name="Fu G."/>
            <person name="Yang J."/>
            <person name="Qin Z.-Q."/>
            <person name="Miao Y.-G."/>
            <person name="Wang W.-Y."/>
            <person name="Chen R.-S."/>
            <person name="Shen Y."/>
            <person name="Chen Z."/>
            <person name="Yuan Z.-H."/>
            <person name="Zhao G.-P."/>
            <person name="Qu D."/>
            <person name="Danchin A."/>
            <person name="Wen Y.-M."/>
        </authorList>
    </citation>
    <scope>NUCLEOTIDE SEQUENCE [LARGE SCALE GENOMIC DNA]</scope>
    <source>
        <strain>ATCC 12228 / FDA PCI 1200</strain>
    </source>
</reference>
<protein>
    <recommendedName>
        <fullName>Na(+)/H(+) antiporter subunit E1</fullName>
    </recommendedName>
    <alternativeName>
        <fullName>Mnh complex subunit E1</fullName>
    </alternativeName>
</protein>
<feature type="chain" id="PRO_0000372149" description="Na(+)/H(+) antiporter subunit E1">
    <location>
        <begin position="1"/>
        <end position="159"/>
    </location>
</feature>
<feature type="transmembrane region" description="Helical" evidence="2">
    <location>
        <begin position="1"/>
        <end position="21"/>
    </location>
</feature>
<feature type="transmembrane region" description="Helical" evidence="2">
    <location>
        <begin position="27"/>
        <end position="47"/>
    </location>
</feature>
<feature type="transmembrane region" description="Helical" evidence="2">
    <location>
        <begin position="60"/>
        <end position="80"/>
    </location>
</feature>
<feature type="transmembrane region" description="Helical" evidence="2">
    <location>
        <begin position="101"/>
        <end position="121"/>
    </location>
</feature>
<comment type="function">
    <text evidence="1">Mnh complex is a Na(+)/H(+) antiporter involved in Na(+) excretion.</text>
</comment>
<comment type="subunit">
    <text evidence="1">May form a heterooligomeric complex that consists of seven subunits: mnhA1, mnhB1, mnhC1, mnhD1, mnhE1, mnhF1 and mnhG1.</text>
</comment>
<comment type="subcellular location">
    <subcellularLocation>
        <location evidence="3">Cell membrane</location>
        <topology evidence="3">Multi-pass membrane protein</topology>
    </subcellularLocation>
</comment>
<comment type="similarity">
    <text evidence="3">Belongs to the CPA3 antiporters (TC 2.A.63) subunit E family.</text>
</comment>
<proteinExistence type="inferred from homology"/>
<name>MNHE1_STAES</name>